<accession>P0DJ49</accession>
<comment type="function">
    <text evidence="3">Dual-function toxin that completely inhibits trypsin activity at a molar ratio of 1:1 (Ki=136 nM) and that inhibits mKv1.3/KCNA3 potassium channel currents (IC(50)=129.7 nM).</text>
</comment>
<comment type="subcellular location">
    <subcellularLocation>
        <location evidence="6">Secreted</location>
    </subcellularLocation>
</comment>
<comment type="tissue specificity">
    <text evidence="6">Expressed by the venom gland.</text>
</comment>
<comment type="miscellaneous">
    <text evidence="6">Negative results: has no effect on chymotrypsin and elastase.</text>
</comment>
<comment type="similarity">
    <text evidence="5">Belongs to the venom Kunitz-type family. Scorpion delta-Ktx subfamily. Delta-Ktx 2 sub-subfamily.</text>
</comment>
<sequence length="59" mass="6693">QKDCSLPVDTGRGKGWFLRYYYNKNSKTCESFIYGGVGGNKNNFLNIENCCKICKAKNC</sequence>
<keyword id="KW-1015">Disulfide bond</keyword>
<keyword id="KW-0872">Ion channel impairing toxin</keyword>
<keyword id="KW-0632">Potassium channel impairing toxin</keyword>
<keyword id="KW-0646">Protease inhibitor</keyword>
<keyword id="KW-0964">Secreted</keyword>
<keyword id="KW-0722">Serine protease inhibitor</keyword>
<keyword id="KW-0800">Toxin</keyword>
<keyword id="KW-1220">Voltage-gated potassium channel impairing toxin</keyword>
<evidence type="ECO:0000250" key="1"/>
<evidence type="ECO:0000255" key="2">
    <source>
        <dbReference type="PROSITE-ProRule" id="PRU00031"/>
    </source>
</evidence>
<evidence type="ECO:0000269" key="3">
    <source>
    </source>
</evidence>
<evidence type="ECO:0000303" key="4">
    <source>
    </source>
</evidence>
<evidence type="ECO:0000305" key="5"/>
<evidence type="ECO:0000305" key="6">
    <source>
    </source>
</evidence>
<protein>
    <recommendedName>
        <fullName evidence="4">Kunitz-type serine protease inhibitor BmKTT-1</fullName>
    </recommendedName>
    <alternativeName>
        <fullName>Delta-KTx 2.4</fullName>
    </alternativeName>
</protein>
<name>VKT24_OLIMR</name>
<feature type="chain" id="PRO_0000418104" description="Kunitz-type serine protease inhibitor BmKTT-1">
    <location>
        <begin position="1"/>
        <end position="59"/>
    </location>
</feature>
<feature type="domain" description="BPTI/Kunitz inhibitor" evidence="2">
    <location>
        <begin position="4"/>
        <end position="54"/>
    </location>
</feature>
<feature type="site" description="Key residue that directly interacts with the S1 pocket of trypsin" evidence="1">
    <location>
        <position position="14"/>
    </location>
</feature>
<feature type="disulfide bond" evidence="2">
    <location>
        <begin position="4"/>
        <end position="54"/>
    </location>
</feature>
<feature type="disulfide bond" evidence="2">
    <location>
        <begin position="29"/>
        <end position="50"/>
    </location>
</feature>
<feature type="disulfide bond" evidence="5">
    <location>
        <begin position="51"/>
        <end position="59"/>
    </location>
</feature>
<proteinExistence type="inferred from homology"/>
<organism>
    <name type="scientific">Olivierus martensii</name>
    <name type="common">Manchurian scorpion</name>
    <name type="synonym">Mesobuthus martensii</name>
    <dbReference type="NCBI Taxonomy" id="34649"/>
    <lineage>
        <taxon>Eukaryota</taxon>
        <taxon>Metazoa</taxon>
        <taxon>Ecdysozoa</taxon>
        <taxon>Arthropoda</taxon>
        <taxon>Chelicerata</taxon>
        <taxon>Arachnida</taxon>
        <taxon>Scorpiones</taxon>
        <taxon>Buthida</taxon>
        <taxon>Buthoidea</taxon>
        <taxon>Buthidae</taxon>
        <taxon>Olivierus</taxon>
    </lineage>
</organism>
<reference key="1">
    <citation type="journal article" date="2012" name="J. Biol. Chem.">
        <title>Hg1, novel peptide inhibitor specific for Kv1.3 channels from first scorpion Kunitz-type potassium channel toxin family.</title>
        <authorList>
            <person name="Chen Z.-Y."/>
            <person name="Hu Y.T."/>
            <person name="Yang W.S."/>
            <person name="He Y.W."/>
            <person name="Feng J."/>
            <person name="Wang B."/>
            <person name="Zhao R.M."/>
            <person name="Ding J.P."/>
            <person name="Cao Z.-J."/>
            <person name="Li W.-X."/>
            <person name="Wu Y.-L."/>
        </authorList>
    </citation>
    <scope>NUCLEOTIDE SEQUENCE [MRNA]</scope>
    <scope>RECOMBINANT EXPRESSION</scope>
    <scope>FUNCTION</scope>
    <source>
        <tissue>Venom gland</tissue>
    </source>
</reference>
<dbReference type="SMR" id="P0DJ49"/>
<dbReference type="GO" id="GO:0005576">
    <property type="term" value="C:extracellular region"/>
    <property type="evidence" value="ECO:0000303"/>
    <property type="project" value="UniProtKB"/>
</dbReference>
<dbReference type="GO" id="GO:0033644">
    <property type="term" value="C:host cell membrane"/>
    <property type="evidence" value="ECO:0000303"/>
    <property type="project" value="UniProtKB"/>
</dbReference>
<dbReference type="GO" id="GO:0015459">
    <property type="term" value="F:potassium channel regulator activity"/>
    <property type="evidence" value="ECO:0007669"/>
    <property type="project" value="UniProtKB-KW"/>
</dbReference>
<dbReference type="GO" id="GO:0004867">
    <property type="term" value="F:serine-type endopeptidase inhibitor activity"/>
    <property type="evidence" value="ECO:0000314"/>
    <property type="project" value="UniProtKB"/>
</dbReference>
<dbReference type="GO" id="GO:0090729">
    <property type="term" value="F:toxin activity"/>
    <property type="evidence" value="ECO:0007669"/>
    <property type="project" value="UniProtKB-KW"/>
</dbReference>
<dbReference type="GO" id="GO:0044562">
    <property type="term" value="P:envenomation resulting in negative regulation of voltage-gated potassium channel activity in another organism"/>
    <property type="evidence" value="ECO:0000314"/>
    <property type="project" value="UniProtKB"/>
</dbReference>
<dbReference type="CDD" id="cd22620">
    <property type="entry name" value="Kunitz_KTT"/>
    <property type="match status" value="1"/>
</dbReference>
<dbReference type="Gene3D" id="4.10.410.10">
    <property type="entry name" value="Pancreatic trypsin inhibitor Kunitz domain"/>
    <property type="match status" value="1"/>
</dbReference>
<dbReference type="InterPro" id="IPR002223">
    <property type="entry name" value="Kunitz_BPTI"/>
</dbReference>
<dbReference type="InterPro" id="IPR036880">
    <property type="entry name" value="Kunitz_BPTI_sf"/>
</dbReference>
<dbReference type="InterPro" id="IPR050098">
    <property type="entry name" value="TFPI/VKTCI-like"/>
</dbReference>
<dbReference type="PANTHER" id="PTHR10083:SF374">
    <property type="entry name" value="BPTI_KUNITZ INHIBITOR DOMAIN-CONTAINING PROTEIN"/>
    <property type="match status" value="1"/>
</dbReference>
<dbReference type="PANTHER" id="PTHR10083">
    <property type="entry name" value="KUNITZ-TYPE PROTEASE INHIBITOR-RELATED"/>
    <property type="match status" value="1"/>
</dbReference>
<dbReference type="Pfam" id="PF00014">
    <property type="entry name" value="Kunitz_BPTI"/>
    <property type="match status" value="1"/>
</dbReference>
<dbReference type="PRINTS" id="PR00759">
    <property type="entry name" value="BASICPTASE"/>
</dbReference>
<dbReference type="SMART" id="SM00131">
    <property type="entry name" value="KU"/>
    <property type="match status" value="1"/>
</dbReference>
<dbReference type="SUPFAM" id="SSF57362">
    <property type="entry name" value="BPTI-like"/>
    <property type="match status" value="1"/>
</dbReference>
<dbReference type="PROSITE" id="PS50279">
    <property type="entry name" value="BPTI_KUNITZ_2"/>
    <property type="match status" value="1"/>
</dbReference>